<evidence type="ECO:0000255" key="1">
    <source>
        <dbReference type="HAMAP-Rule" id="MF_00344"/>
    </source>
</evidence>
<sequence length="525" mass="58665">MTENIHKHRILILDFGSQYTQLVARRVRELGVYCELWAWDVTEAQIRDFNPSGIILSGGPESTTEENSPRAPQYVFEAGVPVFGVCYGMQTMAMQLGGHVEASNEREFGYAQVEVVNDSALVRGIEDALTADGKPLLDVWMSHGDKVTAIPSDFVTVASTESCPFAIMANEEKRFYGVQFHPEVTHTRQGMRMLERFVRDICQCEALWTPAKIIDDAVARIREQVGDDKVILGLSGGVDSSVTAMLLHRAIGKNLTCVFVDNGLLRLNEAEQVLDMFGDHFGLNIVHVPAEDRFLSALAGENDPEAKRKIIGRVFVEVFDEEALKLEDVKWLAQGTIYPDVIESAASATGKAHVIKSHHNVGGLPKEMKMGLVEPLKELFKDEVRKIGLELGLPYDMLYRHPFPGPGLGVRVLGEVKKEYCDLLRRADAIFIEELRKADLYDKVSQAFTVFLPVRSVGVMGDGRKYDWVVSLRAVETIDFMTAHWAHLPYDFLGRVSNRIINEVNGISRVVYDISGKPPATIEWE</sequence>
<dbReference type="EC" id="6.3.5.2" evidence="1"/>
<dbReference type="EMBL" id="CU928161">
    <property type="protein sequence ID" value="CAR03946.1"/>
    <property type="molecule type" value="Genomic_DNA"/>
</dbReference>
<dbReference type="RefSeq" id="WP_000138282.1">
    <property type="nucleotide sequence ID" value="NC_011742.1"/>
</dbReference>
<dbReference type="SMR" id="B7MHY8"/>
<dbReference type="MEROPS" id="C26.957"/>
<dbReference type="GeneID" id="75172615"/>
<dbReference type="KEGG" id="ecz:ECS88_2679"/>
<dbReference type="HOGENOM" id="CLU_014340_0_5_6"/>
<dbReference type="UniPathway" id="UPA00189">
    <property type="reaction ID" value="UER00296"/>
</dbReference>
<dbReference type="Proteomes" id="UP000000747">
    <property type="component" value="Chromosome"/>
</dbReference>
<dbReference type="GO" id="GO:0005829">
    <property type="term" value="C:cytosol"/>
    <property type="evidence" value="ECO:0007669"/>
    <property type="project" value="TreeGrafter"/>
</dbReference>
<dbReference type="GO" id="GO:0005524">
    <property type="term" value="F:ATP binding"/>
    <property type="evidence" value="ECO:0007669"/>
    <property type="project" value="UniProtKB-UniRule"/>
</dbReference>
<dbReference type="GO" id="GO:0003921">
    <property type="term" value="F:GMP synthase activity"/>
    <property type="evidence" value="ECO:0007669"/>
    <property type="project" value="InterPro"/>
</dbReference>
<dbReference type="CDD" id="cd01742">
    <property type="entry name" value="GATase1_GMP_Synthase"/>
    <property type="match status" value="1"/>
</dbReference>
<dbReference type="CDD" id="cd01997">
    <property type="entry name" value="GMP_synthase_C"/>
    <property type="match status" value="1"/>
</dbReference>
<dbReference type="FunFam" id="3.30.300.10:FF:000002">
    <property type="entry name" value="GMP synthase [glutamine-hydrolyzing]"/>
    <property type="match status" value="1"/>
</dbReference>
<dbReference type="FunFam" id="3.40.50.620:FF:000001">
    <property type="entry name" value="GMP synthase [glutamine-hydrolyzing]"/>
    <property type="match status" value="1"/>
</dbReference>
<dbReference type="FunFam" id="3.40.50.880:FF:000001">
    <property type="entry name" value="GMP synthase [glutamine-hydrolyzing]"/>
    <property type="match status" value="1"/>
</dbReference>
<dbReference type="Gene3D" id="3.30.300.10">
    <property type="match status" value="1"/>
</dbReference>
<dbReference type="Gene3D" id="3.40.50.880">
    <property type="match status" value="1"/>
</dbReference>
<dbReference type="Gene3D" id="3.40.50.620">
    <property type="entry name" value="HUPs"/>
    <property type="match status" value="1"/>
</dbReference>
<dbReference type="HAMAP" id="MF_00344">
    <property type="entry name" value="GMP_synthase"/>
    <property type="match status" value="1"/>
</dbReference>
<dbReference type="InterPro" id="IPR029062">
    <property type="entry name" value="Class_I_gatase-like"/>
</dbReference>
<dbReference type="InterPro" id="IPR017926">
    <property type="entry name" value="GATASE"/>
</dbReference>
<dbReference type="InterPro" id="IPR001674">
    <property type="entry name" value="GMP_synth_C"/>
</dbReference>
<dbReference type="InterPro" id="IPR004739">
    <property type="entry name" value="GMP_synth_GATase"/>
</dbReference>
<dbReference type="InterPro" id="IPR022955">
    <property type="entry name" value="GMP_synthase"/>
</dbReference>
<dbReference type="InterPro" id="IPR025777">
    <property type="entry name" value="GMPS_ATP_PPase_dom"/>
</dbReference>
<dbReference type="InterPro" id="IPR022310">
    <property type="entry name" value="NAD/GMP_synthase"/>
</dbReference>
<dbReference type="InterPro" id="IPR014729">
    <property type="entry name" value="Rossmann-like_a/b/a_fold"/>
</dbReference>
<dbReference type="NCBIfam" id="TIGR00884">
    <property type="entry name" value="guaA_Cterm"/>
    <property type="match status" value="1"/>
</dbReference>
<dbReference type="NCBIfam" id="TIGR00888">
    <property type="entry name" value="guaA_Nterm"/>
    <property type="match status" value="1"/>
</dbReference>
<dbReference type="NCBIfam" id="NF000848">
    <property type="entry name" value="PRK00074.1"/>
    <property type="match status" value="1"/>
</dbReference>
<dbReference type="PANTHER" id="PTHR11922:SF2">
    <property type="entry name" value="GMP SYNTHASE [GLUTAMINE-HYDROLYZING]"/>
    <property type="match status" value="1"/>
</dbReference>
<dbReference type="PANTHER" id="PTHR11922">
    <property type="entry name" value="GMP SYNTHASE-RELATED"/>
    <property type="match status" value="1"/>
</dbReference>
<dbReference type="Pfam" id="PF00117">
    <property type="entry name" value="GATase"/>
    <property type="match status" value="1"/>
</dbReference>
<dbReference type="Pfam" id="PF00958">
    <property type="entry name" value="GMP_synt_C"/>
    <property type="match status" value="1"/>
</dbReference>
<dbReference type="Pfam" id="PF02540">
    <property type="entry name" value="NAD_synthase"/>
    <property type="match status" value="1"/>
</dbReference>
<dbReference type="PRINTS" id="PR00097">
    <property type="entry name" value="ANTSNTHASEII"/>
</dbReference>
<dbReference type="PRINTS" id="PR00099">
    <property type="entry name" value="CPSGATASE"/>
</dbReference>
<dbReference type="PRINTS" id="PR00096">
    <property type="entry name" value="GATASE"/>
</dbReference>
<dbReference type="SUPFAM" id="SSF52402">
    <property type="entry name" value="Adenine nucleotide alpha hydrolases-like"/>
    <property type="match status" value="1"/>
</dbReference>
<dbReference type="SUPFAM" id="SSF52317">
    <property type="entry name" value="Class I glutamine amidotransferase-like"/>
    <property type="match status" value="1"/>
</dbReference>
<dbReference type="SUPFAM" id="SSF54810">
    <property type="entry name" value="GMP synthetase C-terminal dimerisation domain"/>
    <property type="match status" value="1"/>
</dbReference>
<dbReference type="PROSITE" id="PS51273">
    <property type="entry name" value="GATASE_TYPE_1"/>
    <property type="match status" value="1"/>
</dbReference>
<dbReference type="PROSITE" id="PS51553">
    <property type="entry name" value="GMPS_ATP_PPASE"/>
    <property type="match status" value="1"/>
</dbReference>
<keyword id="KW-0067">ATP-binding</keyword>
<keyword id="KW-0315">Glutamine amidotransferase</keyword>
<keyword id="KW-0332">GMP biosynthesis</keyword>
<keyword id="KW-0436">Ligase</keyword>
<keyword id="KW-0547">Nucleotide-binding</keyword>
<keyword id="KW-0658">Purine biosynthesis</keyword>
<keyword id="KW-1185">Reference proteome</keyword>
<comment type="function">
    <text evidence="1">Catalyzes the synthesis of GMP from XMP.</text>
</comment>
<comment type="catalytic activity">
    <reaction evidence="1">
        <text>XMP + L-glutamine + ATP + H2O = GMP + L-glutamate + AMP + diphosphate + 2 H(+)</text>
        <dbReference type="Rhea" id="RHEA:11680"/>
        <dbReference type="ChEBI" id="CHEBI:15377"/>
        <dbReference type="ChEBI" id="CHEBI:15378"/>
        <dbReference type="ChEBI" id="CHEBI:29985"/>
        <dbReference type="ChEBI" id="CHEBI:30616"/>
        <dbReference type="ChEBI" id="CHEBI:33019"/>
        <dbReference type="ChEBI" id="CHEBI:57464"/>
        <dbReference type="ChEBI" id="CHEBI:58115"/>
        <dbReference type="ChEBI" id="CHEBI:58359"/>
        <dbReference type="ChEBI" id="CHEBI:456215"/>
        <dbReference type="EC" id="6.3.5.2"/>
    </reaction>
</comment>
<comment type="pathway">
    <text evidence="1">Purine metabolism; GMP biosynthesis; GMP from XMP (L-Gln route): step 1/1.</text>
</comment>
<comment type="subunit">
    <text evidence="1">Homodimer.</text>
</comment>
<gene>
    <name evidence="1" type="primary">guaA</name>
    <name type="ordered locus">ECS88_2679</name>
</gene>
<protein>
    <recommendedName>
        <fullName evidence="1">GMP synthase [glutamine-hydrolyzing]</fullName>
        <ecNumber evidence="1">6.3.5.2</ecNumber>
    </recommendedName>
    <alternativeName>
        <fullName evidence="1">GMP synthetase</fullName>
    </alternativeName>
    <alternativeName>
        <fullName evidence="1">Glutamine amidotransferase</fullName>
    </alternativeName>
</protein>
<accession>B7MHY8</accession>
<proteinExistence type="inferred from homology"/>
<organism>
    <name type="scientific">Escherichia coli O45:K1 (strain S88 / ExPEC)</name>
    <dbReference type="NCBI Taxonomy" id="585035"/>
    <lineage>
        <taxon>Bacteria</taxon>
        <taxon>Pseudomonadati</taxon>
        <taxon>Pseudomonadota</taxon>
        <taxon>Gammaproteobacteria</taxon>
        <taxon>Enterobacterales</taxon>
        <taxon>Enterobacteriaceae</taxon>
        <taxon>Escherichia</taxon>
    </lineage>
</organism>
<name>GUAA_ECO45</name>
<feature type="chain" id="PRO_1000120279" description="GMP synthase [glutamine-hydrolyzing]">
    <location>
        <begin position="1"/>
        <end position="525"/>
    </location>
</feature>
<feature type="domain" description="Glutamine amidotransferase type-1" evidence="1">
    <location>
        <begin position="9"/>
        <end position="207"/>
    </location>
</feature>
<feature type="domain" description="GMPS ATP-PPase" evidence="1">
    <location>
        <begin position="208"/>
        <end position="400"/>
    </location>
</feature>
<feature type="active site" description="Nucleophile" evidence="1">
    <location>
        <position position="86"/>
    </location>
</feature>
<feature type="active site" evidence="1">
    <location>
        <position position="181"/>
    </location>
</feature>
<feature type="active site" evidence="1">
    <location>
        <position position="183"/>
    </location>
</feature>
<feature type="binding site" evidence="1">
    <location>
        <begin position="235"/>
        <end position="241"/>
    </location>
    <ligand>
        <name>ATP</name>
        <dbReference type="ChEBI" id="CHEBI:30616"/>
    </ligand>
</feature>
<reference key="1">
    <citation type="journal article" date="2009" name="PLoS Genet.">
        <title>Organised genome dynamics in the Escherichia coli species results in highly diverse adaptive paths.</title>
        <authorList>
            <person name="Touchon M."/>
            <person name="Hoede C."/>
            <person name="Tenaillon O."/>
            <person name="Barbe V."/>
            <person name="Baeriswyl S."/>
            <person name="Bidet P."/>
            <person name="Bingen E."/>
            <person name="Bonacorsi S."/>
            <person name="Bouchier C."/>
            <person name="Bouvet O."/>
            <person name="Calteau A."/>
            <person name="Chiapello H."/>
            <person name="Clermont O."/>
            <person name="Cruveiller S."/>
            <person name="Danchin A."/>
            <person name="Diard M."/>
            <person name="Dossat C."/>
            <person name="Karoui M.E."/>
            <person name="Frapy E."/>
            <person name="Garry L."/>
            <person name="Ghigo J.M."/>
            <person name="Gilles A.M."/>
            <person name="Johnson J."/>
            <person name="Le Bouguenec C."/>
            <person name="Lescat M."/>
            <person name="Mangenot S."/>
            <person name="Martinez-Jehanne V."/>
            <person name="Matic I."/>
            <person name="Nassif X."/>
            <person name="Oztas S."/>
            <person name="Petit M.A."/>
            <person name="Pichon C."/>
            <person name="Rouy Z."/>
            <person name="Ruf C.S."/>
            <person name="Schneider D."/>
            <person name="Tourret J."/>
            <person name="Vacherie B."/>
            <person name="Vallenet D."/>
            <person name="Medigue C."/>
            <person name="Rocha E.P.C."/>
            <person name="Denamur E."/>
        </authorList>
    </citation>
    <scope>NUCLEOTIDE SEQUENCE [LARGE SCALE GENOMIC DNA]</scope>
    <source>
        <strain>S88 / ExPEC</strain>
    </source>
</reference>